<name>RL16_BIFA0</name>
<reference key="1">
    <citation type="journal article" date="2009" name="J. Bacteriol.">
        <title>Genome sequence of the probiotic bacterium Bifidobacterium animalis subsp. lactis AD011.</title>
        <authorList>
            <person name="Kim J.F."/>
            <person name="Jeong H."/>
            <person name="Yu D.S."/>
            <person name="Choi S.-H."/>
            <person name="Hur C.-G."/>
            <person name="Park M.-S."/>
            <person name="Yoon S.H."/>
            <person name="Kim D.-W."/>
            <person name="Ji G.E."/>
            <person name="Park H.-S."/>
            <person name="Oh T.K."/>
        </authorList>
    </citation>
    <scope>NUCLEOTIDE SEQUENCE [LARGE SCALE GENOMIC DNA]</scope>
    <source>
        <strain>AD011</strain>
    </source>
</reference>
<organism>
    <name type="scientific">Bifidobacterium animalis subsp. lactis (strain AD011)</name>
    <dbReference type="NCBI Taxonomy" id="442563"/>
    <lineage>
        <taxon>Bacteria</taxon>
        <taxon>Bacillati</taxon>
        <taxon>Actinomycetota</taxon>
        <taxon>Actinomycetes</taxon>
        <taxon>Bifidobacteriales</taxon>
        <taxon>Bifidobacteriaceae</taxon>
        <taxon>Bifidobacterium</taxon>
    </lineage>
</organism>
<gene>
    <name evidence="1" type="primary">rplP</name>
    <name type="ordered locus">BLA_0369</name>
</gene>
<protein>
    <recommendedName>
        <fullName evidence="1">Large ribosomal subunit protein uL16</fullName>
    </recommendedName>
    <alternativeName>
        <fullName evidence="3">50S ribosomal protein L16</fullName>
    </alternativeName>
</protein>
<keyword id="KW-1185">Reference proteome</keyword>
<keyword id="KW-0687">Ribonucleoprotein</keyword>
<keyword id="KW-0689">Ribosomal protein</keyword>
<keyword id="KW-0694">RNA-binding</keyword>
<keyword id="KW-0699">rRNA-binding</keyword>
<keyword id="KW-0820">tRNA-binding</keyword>
<dbReference type="EMBL" id="CP001213">
    <property type="protein sequence ID" value="ACL28671.1"/>
    <property type="molecule type" value="Genomic_DNA"/>
</dbReference>
<dbReference type="RefSeq" id="WP_004268585.1">
    <property type="nucleotide sequence ID" value="NC_011835.1"/>
</dbReference>
<dbReference type="SMR" id="B8DW20"/>
<dbReference type="STRING" id="442563.BLA_0369"/>
<dbReference type="GeneID" id="29695228"/>
<dbReference type="KEGG" id="bla:BLA_0369"/>
<dbReference type="HOGENOM" id="CLU_078858_2_1_11"/>
<dbReference type="Proteomes" id="UP000002456">
    <property type="component" value="Chromosome"/>
</dbReference>
<dbReference type="GO" id="GO:0022625">
    <property type="term" value="C:cytosolic large ribosomal subunit"/>
    <property type="evidence" value="ECO:0007669"/>
    <property type="project" value="TreeGrafter"/>
</dbReference>
<dbReference type="GO" id="GO:0019843">
    <property type="term" value="F:rRNA binding"/>
    <property type="evidence" value="ECO:0007669"/>
    <property type="project" value="UniProtKB-UniRule"/>
</dbReference>
<dbReference type="GO" id="GO:0003735">
    <property type="term" value="F:structural constituent of ribosome"/>
    <property type="evidence" value="ECO:0007669"/>
    <property type="project" value="InterPro"/>
</dbReference>
<dbReference type="GO" id="GO:0000049">
    <property type="term" value="F:tRNA binding"/>
    <property type="evidence" value="ECO:0007669"/>
    <property type="project" value="UniProtKB-KW"/>
</dbReference>
<dbReference type="GO" id="GO:0006412">
    <property type="term" value="P:translation"/>
    <property type="evidence" value="ECO:0007669"/>
    <property type="project" value="UniProtKB-UniRule"/>
</dbReference>
<dbReference type="CDD" id="cd01433">
    <property type="entry name" value="Ribosomal_L16_L10e"/>
    <property type="match status" value="1"/>
</dbReference>
<dbReference type="FunFam" id="3.90.1170.10:FF:000001">
    <property type="entry name" value="50S ribosomal protein L16"/>
    <property type="match status" value="1"/>
</dbReference>
<dbReference type="Gene3D" id="3.90.1170.10">
    <property type="entry name" value="Ribosomal protein L10e/L16"/>
    <property type="match status" value="1"/>
</dbReference>
<dbReference type="HAMAP" id="MF_01342">
    <property type="entry name" value="Ribosomal_uL16"/>
    <property type="match status" value="1"/>
</dbReference>
<dbReference type="InterPro" id="IPR047873">
    <property type="entry name" value="Ribosomal_uL16"/>
</dbReference>
<dbReference type="InterPro" id="IPR000114">
    <property type="entry name" value="Ribosomal_uL16_bact-type"/>
</dbReference>
<dbReference type="InterPro" id="IPR020798">
    <property type="entry name" value="Ribosomal_uL16_CS"/>
</dbReference>
<dbReference type="InterPro" id="IPR016180">
    <property type="entry name" value="Ribosomal_uL16_dom"/>
</dbReference>
<dbReference type="InterPro" id="IPR036920">
    <property type="entry name" value="Ribosomal_uL16_sf"/>
</dbReference>
<dbReference type="NCBIfam" id="TIGR01164">
    <property type="entry name" value="rplP_bact"/>
    <property type="match status" value="1"/>
</dbReference>
<dbReference type="PANTHER" id="PTHR12220">
    <property type="entry name" value="50S/60S RIBOSOMAL PROTEIN L16"/>
    <property type="match status" value="1"/>
</dbReference>
<dbReference type="PANTHER" id="PTHR12220:SF13">
    <property type="entry name" value="LARGE RIBOSOMAL SUBUNIT PROTEIN UL16M"/>
    <property type="match status" value="1"/>
</dbReference>
<dbReference type="Pfam" id="PF00252">
    <property type="entry name" value="Ribosomal_L16"/>
    <property type="match status" value="1"/>
</dbReference>
<dbReference type="PRINTS" id="PR00060">
    <property type="entry name" value="RIBOSOMALL16"/>
</dbReference>
<dbReference type="SUPFAM" id="SSF54686">
    <property type="entry name" value="Ribosomal protein L16p/L10e"/>
    <property type="match status" value="1"/>
</dbReference>
<dbReference type="PROSITE" id="PS00701">
    <property type="entry name" value="RIBOSOMAL_L16_2"/>
    <property type="match status" value="1"/>
</dbReference>
<feature type="chain" id="PRO_1000166337" description="Large ribosomal subunit protein uL16">
    <location>
        <begin position="1"/>
        <end position="139"/>
    </location>
</feature>
<feature type="region of interest" description="Disordered" evidence="2">
    <location>
        <begin position="1"/>
        <end position="23"/>
    </location>
</feature>
<feature type="compositionally biased region" description="Basic residues" evidence="2">
    <location>
        <begin position="1"/>
        <end position="16"/>
    </location>
</feature>
<proteinExistence type="inferred from homology"/>
<accession>B8DW20</accession>
<sequence>MLIPKRTKYRKQHRPDRHGMSKGGNEINFGDFAIQALAPAYVTNRQIEAARIAMTRYIKRGGKVWITIFPDRPLTKHPLGARMGSGKGTPEFWIANVHPGRVMFEIGGVSEDVAREALRRAIDKLPMKCRVIAREGGDI</sequence>
<evidence type="ECO:0000255" key="1">
    <source>
        <dbReference type="HAMAP-Rule" id="MF_01342"/>
    </source>
</evidence>
<evidence type="ECO:0000256" key="2">
    <source>
        <dbReference type="SAM" id="MobiDB-lite"/>
    </source>
</evidence>
<evidence type="ECO:0000305" key="3"/>
<comment type="function">
    <text evidence="1">Binds 23S rRNA and is also seen to make contacts with the A and possibly P site tRNAs.</text>
</comment>
<comment type="subunit">
    <text evidence="1">Part of the 50S ribosomal subunit.</text>
</comment>
<comment type="similarity">
    <text evidence="1">Belongs to the universal ribosomal protein uL16 family.</text>
</comment>